<organism>
    <name type="scientific">Corynebacterium glutamicum (strain ATCC 13032 / K051)</name>
    <dbReference type="NCBI Taxonomy" id="1204414"/>
    <lineage>
        <taxon>Bacteria</taxon>
        <taxon>Bacillati</taxon>
        <taxon>Actinomycetota</taxon>
        <taxon>Actinomycetes</taxon>
        <taxon>Mycobacteriales</taxon>
        <taxon>Corynebacteriaceae</taxon>
        <taxon>Corynebacterium</taxon>
    </lineage>
</organism>
<comment type="function">
    <text evidence="1">Involved in defense against toxic arsenate. Involved in the mycothiol/myoredoxin redox pathway which uses a mycothioltransferase mechanism; functions as a monothiol mixed disulfide reductase and is recycled by a second mycothiol forming mycothione which in turn is reduced in a NADPH-dependent manner (By similarity).</text>
</comment>
<comment type="catalytic activity">
    <reaction>
        <text>[mycoredoxin]-L-cysteine + arseno-mycothiol + H(+) = [mycoredoxin]-S-mycothiol-L-cysteine + arsenite</text>
        <dbReference type="Rhea" id="RHEA:54036"/>
        <dbReference type="Rhea" id="RHEA-COMP:13766"/>
        <dbReference type="Rhea" id="RHEA-COMP:13767"/>
        <dbReference type="ChEBI" id="CHEBI:15378"/>
        <dbReference type="ChEBI" id="CHEBI:29242"/>
        <dbReference type="ChEBI" id="CHEBI:29950"/>
        <dbReference type="ChEBI" id="CHEBI:59655"/>
        <dbReference type="ChEBI" id="CHEBI:138035"/>
        <dbReference type="EC" id="1.20.4.3"/>
    </reaction>
</comment>
<comment type="subcellular location">
    <subcellularLocation>
        <location evidence="1">Cytoplasm</location>
    </subcellularLocation>
</comment>
<comment type="similarity">
    <text evidence="2">Belongs to the glutaredoxin family.</text>
</comment>
<gene>
    <name type="primary">mrx1</name>
    <name type="ordered locus">WA5_0808</name>
</gene>
<sequence>MSNVTIYATDWCPYCRSLLKGLDGQEYDLIDVDQDEEAGEWVKSVNDGNRIVPTVRYSDGTHATNPLAAEVIAKIEALA</sequence>
<proteinExistence type="inferred from homology"/>
<protein>
    <recommendedName>
        <fullName>Mycoredoxin 1</fullName>
        <ecNumber>1.20.4.3</ecNumber>
    </recommendedName>
</protein>
<name>MRX1_CORGK</name>
<keyword id="KW-0059">Arsenical resistance</keyword>
<keyword id="KW-0963">Cytoplasm</keyword>
<keyword id="KW-0560">Oxidoreductase</keyword>
<accession>P0DKT0</accession>
<accession>Q6M6U4</accession>
<accession>Q8NS40</accession>
<evidence type="ECO:0000250" key="1"/>
<evidence type="ECO:0000305" key="2"/>
<reference key="1">
    <citation type="journal article" date="2012" name="Genome Biol.">
        <title>A high-throughput approach to identify genomic variants of bacterial metabolite producers at the single-cell level.</title>
        <authorList>
            <person name="Binder S."/>
            <person name="Schendzielorz G."/>
            <person name="Stabler N."/>
            <person name="Krumbach K."/>
            <person name="Hoffmann K."/>
            <person name="Bott M."/>
            <person name="Eggeling L."/>
        </authorList>
    </citation>
    <scope>NUCLEOTIDE SEQUENCE [LARGE SCALE GENOMIC DNA]</scope>
    <source>
        <strain>ATCC 13032 / K051</strain>
    </source>
</reference>
<feature type="chain" id="PRO_0000420637" description="Mycoredoxin 1">
    <location>
        <begin position="1"/>
        <end position="79"/>
    </location>
</feature>
<feature type="domain" description="Glutaredoxin">
    <location>
        <begin position="1"/>
        <end position="79"/>
    </location>
</feature>
<dbReference type="EC" id="1.20.4.3"/>
<dbReference type="EMBL" id="HE802067">
    <property type="protein sequence ID" value="CCH24028.1"/>
    <property type="molecule type" value="Genomic_DNA"/>
</dbReference>
<dbReference type="RefSeq" id="WP_011013923.1">
    <property type="nucleotide sequence ID" value="NC_020519.1"/>
</dbReference>
<dbReference type="SMR" id="P0DKT0"/>
<dbReference type="KEGG" id="cgu:WA5_0808"/>
<dbReference type="PATRIC" id="fig|1204414.5.peg.868"/>
<dbReference type="HOGENOM" id="CLU_026126_11_1_11"/>
<dbReference type="GO" id="GO:0005737">
    <property type="term" value="C:cytoplasm"/>
    <property type="evidence" value="ECO:0007669"/>
    <property type="project" value="UniProtKB-SubCell"/>
</dbReference>
<dbReference type="GO" id="GO:0016491">
    <property type="term" value="F:oxidoreductase activity"/>
    <property type="evidence" value="ECO:0007669"/>
    <property type="project" value="UniProtKB-KW"/>
</dbReference>
<dbReference type="GO" id="GO:0046685">
    <property type="term" value="P:response to arsenic-containing substance"/>
    <property type="evidence" value="ECO:0007669"/>
    <property type="project" value="UniProtKB-KW"/>
</dbReference>
<dbReference type="CDD" id="cd02976">
    <property type="entry name" value="NrdH"/>
    <property type="match status" value="1"/>
</dbReference>
<dbReference type="Gene3D" id="3.40.30.10">
    <property type="entry name" value="Glutaredoxin"/>
    <property type="match status" value="1"/>
</dbReference>
<dbReference type="InterPro" id="IPR011915">
    <property type="entry name" value="GlrX_actino"/>
</dbReference>
<dbReference type="InterPro" id="IPR002109">
    <property type="entry name" value="Glutaredoxin"/>
</dbReference>
<dbReference type="InterPro" id="IPR036249">
    <property type="entry name" value="Thioredoxin-like_sf"/>
</dbReference>
<dbReference type="NCBIfam" id="TIGR02200">
    <property type="entry name" value="GlrX_actino"/>
    <property type="match status" value="1"/>
</dbReference>
<dbReference type="Pfam" id="PF00462">
    <property type="entry name" value="Glutaredoxin"/>
    <property type="match status" value="1"/>
</dbReference>
<dbReference type="SUPFAM" id="SSF52833">
    <property type="entry name" value="Thioredoxin-like"/>
    <property type="match status" value="1"/>
</dbReference>